<accession>Q3UWS6</accession>
<sequence length="143" mass="15568">MVAFFSKATKCGNGHLPADLRFGGAVYLKPSIGPSEAVVQRNSMDKLDFQNIDLVSEINKRRKAMATRDETITKKSGEGEEMLPSMGMDHESPSKAHLMVPPAPPPSPADAADINGFSFKIWEAGTSVNSDFNSWKANVSKFH</sequence>
<feature type="chain" id="PRO_0000442230" description="Myocilin opposite strand protein">
    <location>
        <begin position="1"/>
        <end position="143"/>
    </location>
</feature>
<feature type="region of interest" description="Disordered" evidence="2">
    <location>
        <begin position="65"/>
        <end position="111"/>
    </location>
</feature>
<feature type="compositionally biased region" description="Basic and acidic residues" evidence="2">
    <location>
        <begin position="66"/>
        <end position="78"/>
    </location>
</feature>
<protein>
    <recommendedName>
        <fullName evidence="1">Myocilin opposite strand protein</fullName>
    </recommendedName>
</protein>
<gene>
    <name evidence="1" type="primary">Myocos</name>
</gene>
<keyword id="KW-1185">Reference proteome</keyword>
<reference key="1">
    <citation type="journal article" date="2005" name="Science">
        <title>The transcriptional landscape of the mammalian genome.</title>
        <authorList>
            <person name="Carninci P."/>
            <person name="Kasukawa T."/>
            <person name="Katayama S."/>
            <person name="Gough J."/>
            <person name="Frith M.C."/>
            <person name="Maeda N."/>
            <person name="Oyama R."/>
            <person name="Ravasi T."/>
            <person name="Lenhard B."/>
            <person name="Wells C."/>
            <person name="Kodzius R."/>
            <person name="Shimokawa K."/>
            <person name="Bajic V.B."/>
            <person name="Brenner S.E."/>
            <person name="Batalov S."/>
            <person name="Forrest A.R."/>
            <person name="Zavolan M."/>
            <person name="Davis M.J."/>
            <person name="Wilming L.G."/>
            <person name="Aidinis V."/>
            <person name="Allen J.E."/>
            <person name="Ambesi-Impiombato A."/>
            <person name="Apweiler R."/>
            <person name="Aturaliya R.N."/>
            <person name="Bailey T.L."/>
            <person name="Bansal M."/>
            <person name="Baxter L."/>
            <person name="Beisel K.W."/>
            <person name="Bersano T."/>
            <person name="Bono H."/>
            <person name="Chalk A.M."/>
            <person name="Chiu K.P."/>
            <person name="Choudhary V."/>
            <person name="Christoffels A."/>
            <person name="Clutterbuck D.R."/>
            <person name="Crowe M.L."/>
            <person name="Dalla E."/>
            <person name="Dalrymple B.P."/>
            <person name="de Bono B."/>
            <person name="Della Gatta G."/>
            <person name="di Bernardo D."/>
            <person name="Down T."/>
            <person name="Engstrom P."/>
            <person name="Fagiolini M."/>
            <person name="Faulkner G."/>
            <person name="Fletcher C.F."/>
            <person name="Fukushima T."/>
            <person name="Furuno M."/>
            <person name="Futaki S."/>
            <person name="Gariboldi M."/>
            <person name="Georgii-Hemming P."/>
            <person name="Gingeras T.R."/>
            <person name="Gojobori T."/>
            <person name="Green R.E."/>
            <person name="Gustincich S."/>
            <person name="Harbers M."/>
            <person name="Hayashi Y."/>
            <person name="Hensch T.K."/>
            <person name="Hirokawa N."/>
            <person name="Hill D."/>
            <person name="Huminiecki L."/>
            <person name="Iacono M."/>
            <person name="Ikeo K."/>
            <person name="Iwama A."/>
            <person name="Ishikawa T."/>
            <person name="Jakt M."/>
            <person name="Kanapin A."/>
            <person name="Katoh M."/>
            <person name="Kawasawa Y."/>
            <person name="Kelso J."/>
            <person name="Kitamura H."/>
            <person name="Kitano H."/>
            <person name="Kollias G."/>
            <person name="Krishnan S.P."/>
            <person name="Kruger A."/>
            <person name="Kummerfeld S.K."/>
            <person name="Kurochkin I.V."/>
            <person name="Lareau L.F."/>
            <person name="Lazarevic D."/>
            <person name="Lipovich L."/>
            <person name="Liu J."/>
            <person name="Liuni S."/>
            <person name="McWilliam S."/>
            <person name="Madan Babu M."/>
            <person name="Madera M."/>
            <person name="Marchionni L."/>
            <person name="Matsuda H."/>
            <person name="Matsuzawa S."/>
            <person name="Miki H."/>
            <person name="Mignone F."/>
            <person name="Miyake S."/>
            <person name="Morris K."/>
            <person name="Mottagui-Tabar S."/>
            <person name="Mulder N."/>
            <person name="Nakano N."/>
            <person name="Nakauchi H."/>
            <person name="Ng P."/>
            <person name="Nilsson R."/>
            <person name="Nishiguchi S."/>
            <person name="Nishikawa S."/>
            <person name="Nori F."/>
            <person name="Ohara O."/>
            <person name="Okazaki Y."/>
            <person name="Orlando V."/>
            <person name="Pang K.C."/>
            <person name="Pavan W.J."/>
            <person name="Pavesi G."/>
            <person name="Pesole G."/>
            <person name="Petrovsky N."/>
            <person name="Piazza S."/>
            <person name="Reed J."/>
            <person name="Reid J.F."/>
            <person name="Ring B.Z."/>
            <person name="Ringwald M."/>
            <person name="Rost B."/>
            <person name="Ruan Y."/>
            <person name="Salzberg S.L."/>
            <person name="Sandelin A."/>
            <person name="Schneider C."/>
            <person name="Schoenbach C."/>
            <person name="Sekiguchi K."/>
            <person name="Semple C.A."/>
            <person name="Seno S."/>
            <person name="Sessa L."/>
            <person name="Sheng Y."/>
            <person name="Shibata Y."/>
            <person name="Shimada H."/>
            <person name="Shimada K."/>
            <person name="Silva D."/>
            <person name="Sinclair B."/>
            <person name="Sperling S."/>
            <person name="Stupka E."/>
            <person name="Sugiura K."/>
            <person name="Sultana R."/>
            <person name="Takenaka Y."/>
            <person name="Taki K."/>
            <person name="Tammoja K."/>
            <person name="Tan S.L."/>
            <person name="Tang S."/>
            <person name="Taylor M.S."/>
            <person name="Tegner J."/>
            <person name="Teichmann S.A."/>
            <person name="Ueda H.R."/>
            <person name="van Nimwegen E."/>
            <person name="Verardo R."/>
            <person name="Wei C.L."/>
            <person name="Yagi K."/>
            <person name="Yamanishi H."/>
            <person name="Zabarovsky E."/>
            <person name="Zhu S."/>
            <person name="Zimmer A."/>
            <person name="Hide W."/>
            <person name="Bult C."/>
            <person name="Grimmond S.M."/>
            <person name="Teasdale R.D."/>
            <person name="Liu E.T."/>
            <person name="Brusic V."/>
            <person name="Quackenbush J."/>
            <person name="Wahlestedt C."/>
            <person name="Mattick J.S."/>
            <person name="Hume D.A."/>
            <person name="Kai C."/>
            <person name="Sasaki D."/>
            <person name="Tomaru Y."/>
            <person name="Fukuda S."/>
            <person name="Kanamori-Katayama M."/>
            <person name="Suzuki M."/>
            <person name="Aoki J."/>
            <person name="Arakawa T."/>
            <person name="Iida J."/>
            <person name="Imamura K."/>
            <person name="Itoh M."/>
            <person name="Kato T."/>
            <person name="Kawaji H."/>
            <person name="Kawagashira N."/>
            <person name="Kawashima T."/>
            <person name="Kojima M."/>
            <person name="Kondo S."/>
            <person name="Konno H."/>
            <person name="Nakano K."/>
            <person name="Ninomiya N."/>
            <person name="Nishio T."/>
            <person name="Okada M."/>
            <person name="Plessy C."/>
            <person name="Shibata K."/>
            <person name="Shiraki T."/>
            <person name="Suzuki S."/>
            <person name="Tagami M."/>
            <person name="Waki K."/>
            <person name="Watahiki A."/>
            <person name="Okamura-Oho Y."/>
            <person name="Suzuki H."/>
            <person name="Kawai J."/>
            <person name="Hayashizaki Y."/>
        </authorList>
    </citation>
    <scope>NUCLEOTIDE SEQUENCE [LARGE SCALE MRNA]</scope>
</reference>
<reference key="2">
    <citation type="journal article" date="2009" name="PLoS Biol.">
        <title>Lineage-specific biology revealed by a finished genome assembly of the mouse.</title>
        <authorList>
            <person name="Church D.M."/>
            <person name="Goodstadt L."/>
            <person name="Hillier L.W."/>
            <person name="Zody M.C."/>
            <person name="Goldstein S."/>
            <person name="She X."/>
            <person name="Bult C.J."/>
            <person name="Agarwala R."/>
            <person name="Cherry J.L."/>
            <person name="DiCuccio M."/>
            <person name="Hlavina W."/>
            <person name="Kapustin Y."/>
            <person name="Meric P."/>
            <person name="Maglott D."/>
            <person name="Birtle Z."/>
            <person name="Marques A.C."/>
            <person name="Graves T."/>
            <person name="Zhou S."/>
            <person name="Teague B."/>
            <person name="Potamousis K."/>
            <person name="Churas C."/>
            <person name="Place M."/>
            <person name="Herschleb J."/>
            <person name="Runnheim R."/>
            <person name="Forrest D."/>
            <person name="Amos-Landgraf J."/>
            <person name="Schwartz D.C."/>
            <person name="Cheng Z."/>
            <person name="Lindblad-Toh K."/>
            <person name="Eichler E.E."/>
            <person name="Ponting C.P."/>
        </authorList>
    </citation>
    <scope>NUCLEOTIDE SEQUENCE [LARGE SCALE GENOMIC DNA]</scope>
    <source>
        <strain>C57BL/6J</strain>
    </source>
</reference>
<name>MYCOS_MOUSE</name>
<dbReference type="EMBL" id="AK136134">
    <property type="protein sequence ID" value="BAE22838.1"/>
    <property type="molecule type" value="mRNA"/>
</dbReference>
<dbReference type="EMBL" id="AC132867">
    <property type="status" value="NOT_ANNOTATED_CDS"/>
    <property type="molecule type" value="Genomic_DNA"/>
</dbReference>
<dbReference type="CCDS" id="CCDS48418.1"/>
<dbReference type="RefSeq" id="NP_001171052.1">
    <property type="nucleotide sequence ID" value="NM_001177581.1"/>
</dbReference>
<dbReference type="STRING" id="10090.ENSMUSP00000127102"/>
<dbReference type="PaxDb" id="10090-ENSMUSP00000127102"/>
<dbReference type="Ensembl" id="ENSMUST00000169439.3">
    <property type="protein sequence ID" value="ENSMUSP00000127102.2"/>
    <property type="gene ID" value="ENSMUSG00000091060.3"/>
</dbReference>
<dbReference type="GeneID" id="100038657"/>
<dbReference type="KEGG" id="mmu:100038657"/>
<dbReference type="UCSC" id="uc007dgn.2">
    <property type="organism name" value="mouse"/>
</dbReference>
<dbReference type="AGR" id="MGI:3642786"/>
<dbReference type="CTD" id="110806290"/>
<dbReference type="MGI" id="MGI:3642786">
    <property type="gene designation" value="Myocos"/>
</dbReference>
<dbReference type="VEuPathDB" id="HostDB:ENSMUSG00000091060"/>
<dbReference type="GeneTree" id="ENSGT00860000135681"/>
<dbReference type="HOGENOM" id="CLU_1805542_0_0_1"/>
<dbReference type="InParanoid" id="Q3UWS6"/>
<dbReference type="OrthoDB" id="9634327at2759"/>
<dbReference type="BioGRID-ORCS" id="100038657">
    <property type="hits" value="2 hits in 77 CRISPR screens"/>
</dbReference>
<dbReference type="ChiTaRS" id="Myocos">
    <property type="organism name" value="mouse"/>
</dbReference>
<dbReference type="PRO" id="PR:Q3UWS6"/>
<dbReference type="Proteomes" id="UP000000589">
    <property type="component" value="Chromosome 1"/>
</dbReference>
<dbReference type="RNAct" id="Q3UWS6">
    <property type="molecule type" value="protein"/>
</dbReference>
<dbReference type="Bgee" id="ENSMUSG00000091060">
    <property type="expression patterns" value="Expressed in primary oocyte and 20 other cell types or tissues"/>
</dbReference>
<dbReference type="ExpressionAtlas" id="Q3UWS6">
    <property type="expression patterns" value="baseline and differential"/>
</dbReference>
<evidence type="ECO:0000250" key="1">
    <source>
        <dbReference type="UniProtKB" id="A0A1B0GUC4"/>
    </source>
</evidence>
<evidence type="ECO:0000256" key="2">
    <source>
        <dbReference type="SAM" id="MobiDB-lite"/>
    </source>
</evidence>
<organism>
    <name type="scientific">Mus musculus</name>
    <name type="common">Mouse</name>
    <dbReference type="NCBI Taxonomy" id="10090"/>
    <lineage>
        <taxon>Eukaryota</taxon>
        <taxon>Metazoa</taxon>
        <taxon>Chordata</taxon>
        <taxon>Craniata</taxon>
        <taxon>Vertebrata</taxon>
        <taxon>Euteleostomi</taxon>
        <taxon>Mammalia</taxon>
        <taxon>Eutheria</taxon>
        <taxon>Euarchontoglires</taxon>
        <taxon>Glires</taxon>
        <taxon>Rodentia</taxon>
        <taxon>Myomorpha</taxon>
        <taxon>Muroidea</taxon>
        <taxon>Muridae</taxon>
        <taxon>Murinae</taxon>
        <taxon>Mus</taxon>
        <taxon>Mus</taxon>
    </lineage>
</organism>
<proteinExistence type="evidence at transcript level"/>